<comment type="function">
    <text evidence="3 5">Required for the stabilization, possibly via formation of a disulfide bond, of the obligatory competence protein ComGC. Not normally required for production of the secreted lantibiotic sublancin 168, although it can partially substitute for BdbB when the latter is absent. It may also be required for the stability of other secreted proteins. Not required for sporulation.</text>
</comment>
<comment type="subcellular location">
    <subcellularLocation>
        <location evidence="6">Cell membrane</location>
        <topology evidence="7">Multi-pass membrane protein</topology>
    </subcellularLocation>
    <subcellularLocation>
        <location evidence="6">Membrane raft</location>
        <topology evidence="2">Multi-pass membrane protein</topology>
    </subcellularLocation>
    <text evidence="6">Present in detergent-resistant membrane (DRM) fractions that may be equivalent to eukaryotic membrane rafts; these rafts include proteins involved in signaling, molecule trafficking and protein secretion.</text>
</comment>
<comment type="developmental stage">
    <text>A late competence gene, expression is enhanced in the presence of ComK.</text>
</comment>
<comment type="disruption phenotype">
    <text evidence="4">Cells partially restore cytochrome c oxidase activity in a CcdA-deficient mutant, possibly because the bacteria can no longer oxidize the two heme-binding thiol groups in apocytochrome c.</text>
</comment>
<comment type="similarity">
    <text evidence="7">Belongs to the DsbB family. BdbC subfamily.</text>
</comment>
<gene>
    <name type="primary">bdbC</name>
    <name type="synonym">yvgU</name>
    <name type="ordered locus">BSU33470</name>
</gene>
<reference key="1">
    <citation type="journal article" date="1997" name="Nature">
        <title>The complete genome sequence of the Gram-positive bacterium Bacillus subtilis.</title>
        <authorList>
            <person name="Kunst F."/>
            <person name="Ogasawara N."/>
            <person name="Moszer I."/>
            <person name="Albertini A.M."/>
            <person name="Alloni G."/>
            <person name="Azevedo V."/>
            <person name="Bertero M.G."/>
            <person name="Bessieres P."/>
            <person name="Bolotin A."/>
            <person name="Borchert S."/>
            <person name="Borriss R."/>
            <person name="Boursier L."/>
            <person name="Brans A."/>
            <person name="Braun M."/>
            <person name="Brignell S.C."/>
            <person name="Bron S."/>
            <person name="Brouillet S."/>
            <person name="Bruschi C.V."/>
            <person name="Caldwell B."/>
            <person name="Capuano V."/>
            <person name="Carter N.M."/>
            <person name="Choi S.-K."/>
            <person name="Codani J.-J."/>
            <person name="Connerton I.F."/>
            <person name="Cummings N.J."/>
            <person name="Daniel R.A."/>
            <person name="Denizot F."/>
            <person name="Devine K.M."/>
            <person name="Duesterhoeft A."/>
            <person name="Ehrlich S.D."/>
            <person name="Emmerson P.T."/>
            <person name="Entian K.-D."/>
            <person name="Errington J."/>
            <person name="Fabret C."/>
            <person name="Ferrari E."/>
            <person name="Foulger D."/>
            <person name="Fritz C."/>
            <person name="Fujita M."/>
            <person name="Fujita Y."/>
            <person name="Fuma S."/>
            <person name="Galizzi A."/>
            <person name="Galleron N."/>
            <person name="Ghim S.-Y."/>
            <person name="Glaser P."/>
            <person name="Goffeau A."/>
            <person name="Golightly E.J."/>
            <person name="Grandi G."/>
            <person name="Guiseppi G."/>
            <person name="Guy B.J."/>
            <person name="Haga K."/>
            <person name="Haiech J."/>
            <person name="Harwood C.R."/>
            <person name="Henaut A."/>
            <person name="Hilbert H."/>
            <person name="Holsappel S."/>
            <person name="Hosono S."/>
            <person name="Hullo M.-F."/>
            <person name="Itaya M."/>
            <person name="Jones L.-M."/>
            <person name="Joris B."/>
            <person name="Karamata D."/>
            <person name="Kasahara Y."/>
            <person name="Klaerr-Blanchard M."/>
            <person name="Klein C."/>
            <person name="Kobayashi Y."/>
            <person name="Koetter P."/>
            <person name="Koningstein G."/>
            <person name="Krogh S."/>
            <person name="Kumano M."/>
            <person name="Kurita K."/>
            <person name="Lapidus A."/>
            <person name="Lardinois S."/>
            <person name="Lauber J."/>
            <person name="Lazarevic V."/>
            <person name="Lee S.-M."/>
            <person name="Levine A."/>
            <person name="Liu H."/>
            <person name="Masuda S."/>
            <person name="Mauel C."/>
            <person name="Medigue C."/>
            <person name="Medina N."/>
            <person name="Mellado R.P."/>
            <person name="Mizuno M."/>
            <person name="Moestl D."/>
            <person name="Nakai S."/>
            <person name="Noback M."/>
            <person name="Noone D."/>
            <person name="O'Reilly M."/>
            <person name="Ogawa K."/>
            <person name="Ogiwara A."/>
            <person name="Oudega B."/>
            <person name="Park S.-H."/>
            <person name="Parro V."/>
            <person name="Pohl T.M."/>
            <person name="Portetelle D."/>
            <person name="Porwollik S."/>
            <person name="Prescott A.M."/>
            <person name="Presecan E."/>
            <person name="Pujic P."/>
            <person name="Purnelle B."/>
            <person name="Rapoport G."/>
            <person name="Rey M."/>
            <person name="Reynolds S."/>
            <person name="Rieger M."/>
            <person name="Rivolta C."/>
            <person name="Rocha E."/>
            <person name="Roche B."/>
            <person name="Rose M."/>
            <person name="Sadaie Y."/>
            <person name="Sato T."/>
            <person name="Scanlan E."/>
            <person name="Schleich S."/>
            <person name="Schroeter R."/>
            <person name="Scoffone F."/>
            <person name="Sekiguchi J."/>
            <person name="Sekowska A."/>
            <person name="Seror S.J."/>
            <person name="Serror P."/>
            <person name="Shin B.-S."/>
            <person name="Soldo B."/>
            <person name="Sorokin A."/>
            <person name="Tacconi E."/>
            <person name="Takagi T."/>
            <person name="Takahashi H."/>
            <person name="Takemaru K."/>
            <person name="Takeuchi M."/>
            <person name="Tamakoshi A."/>
            <person name="Tanaka T."/>
            <person name="Terpstra P."/>
            <person name="Tognoni A."/>
            <person name="Tosato V."/>
            <person name="Uchiyama S."/>
            <person name="Vandenbol M."/>
            <person name="Vannier F."/>
            <person name="Vassarotti A."/>
            <person name="Viari A."/>
            <person name="Wambutt R."/>
            <person name="Wedler E."/>
            <person name="Wedler H."/>
            <person name="Weitzenegger T."/>
            <person name="Winters P."/>
            <person name="Wipat A."/>
            <person name="Yamamoto H."/>
            <person name="Yamane K."/>
            <person name="Yasumoto K."/>
            <person name="Yata K."/>
            <person name="Yoshida K."/>
            <person name="Yoshikawa H.-F."/>
            <person name="Zumstein E."/>
            <person name="Yoshikawa H."/>
            <person name="Danchin A."/>
        </authorList>
    </citation>
    <scope>NUCLEOTIDE SEQUENCE [LARGE SCALE GENOMIC DNA]</scope>
    <source>
        <strain>168</strain>
    </source>
</reference>
<reference key="2">
    <citation type="journal article" date="1999" name="J. Biol. Chem.">
        <title>Functional analysis of paralogous thiol-disulfide oxidoreductases in Bacillus subtilis.</title>
        <authorList>
            <person name="Bolhuis A."/>
            <person name="Venema G."/>
            <person name="Quax W.J."/>
            <person name="Bron S."/>
            <person name="van Dijl J.M."/>
        </authorList>
    </citation>
    <scope>IDENTIFICATION OF FUNCTION</scope>
    <source>
        <strain>168</strain>
    </source>
</reference>
<reference key="3">
    <citation type="journal article" date="2002" name="J. Bacteriol.">
        <title>Mutations in the thiol-disulfide oxidoreductases BdbC and BdbD can suppress cytochrome c deficiency of CcdA-defective Bacillus subtilis cells.</title>
        <authorList>
            <person name="Erlendsson L.S."/>
            <person name="Hederstedt L."/>
        </authorList>
    </citation>
    <scope>DISRUPTION PHENOTYPE</scope>
    <source>
        <strain>168 / BGSC1A1</strain>
    </source>
</reference>
<reference key="4">
    <citation type="journal article" date="2002" name="J. Biol. Chem.">
        <title>The bdbDC operon of Bacillus subtilis encodes thiol-disulfide oxidoreductases required for competence development.</title>
        <authorList>
            <person name="Meima R."/>
            <person name="Eschevins C."/>
            <person name="Fillinger S."/>
            <person name="Bolhuis A."/>
            <person name="Hamoen L.W."/>
            <person name="Dorenbos R."/>
            <person name="Quax W.J."/>
            <person name="van Dijl J.M."/>
            <person name="Provvedi R."/>
            <person name="Chen I."/>
            <person name="Dubnau D."/>
            <person name="Bron S."/>
        </authorList>
    </citation>
    <scope>FUNCTION IN PRODUCTION OF COMGC</scope>
    <source>
        <strain>168</strain>
    </source>
</reference>
<reference key="5">
    <citation type="journal article" date="2002" name="J. Biol. Chem.">
        <title>Thiol-disulfide oxidoreductases are essential for the production of the lantibiotic sublancin 168.</title>
        <authorList>
            <person name="Dorenbos R."/>
            <person name="Stein T."/>
            <person name="Kabel J."/>
            <person name="Bruand C."/>
            <person name="Bolhuis A."/>
            <person name="Bron S."/>
            <person name="Quax W.J."/>
            <person name="Van Dijl J.M."/>
        </authorList>
    </citation>
    <scope>FUNCTION IN PRODUCTION OF SUBLANCIN 168</scope>
    <source>
        <strain>168</strain>
    </source>
</reference>
<reference key="6">
    <citation type="journal article" date="2010" name="Genes Dev.">
        <title>Functional microdomains in bacterial membranes.</title>
        <authorList>
            <person name="Lopez D."/>
            <person name="Kolter R."/>
        </authorList>
    </citation>
    <scope>SUBCELLULAR LOCATION</scope>
    <source>
        <strain>168 / Marburg / ATCC 6051 / DSM 10 / JCM 1465 / NBRC 13719 / NCIMB 3610 / NRRL NRS-744 / VKM B-501</strain>
    </source>
</reference>
<evidence type="ECO:0000250" key="1"/>
<evidence type="ECO:0000255" key="2"/>
<evidence type="ECO:0000269" key="3">
    <source>
    </source>
</evidence>
<evidence type="ECO:0000269" key="4">
    <source>
    </source>
</evidence>
<evidence type="ECO:0000269" key="5">
    <source>
    </source>
</evidence>
<evidence type="ECO:0000269" key="6">
    <source>
    </source>
</evidence>
<evidence type="ECO:0000305" key="7"/>
<protein>
    <recommendedName>
        <fullName>Disulfide bond formation protein C</fullName>
    </recommendedName>
    <alternativeName>
        <fullName>Disulfide oxidoreductase C</fullName>
    </alternativeName>
    <alternativeName>
        <fullName>Thiol-disulfide oxidoreductase C</fullName>
    </alternativeName>
</protein>
<proteinExistence type="evidence at protein level"/>
<accession>O32217</accession>
<sequence>MKNRIVFLYASWVVALIAMLGSLYFSEIRKFIPCELCWYQRILMYPLVLILGIATFQGDTRVKKYVLPMAIIGAFISIMHYLEQKVPGFSGIKPCVSGVPCSGQYINWFGFITIPFLALIAFILIIIFMCLLKGEKSE</sequence>
<keyword id="KW-1003">Cell membrane</keyword>
<keyword id="KW-0143">Chaperone</keyword>
<keyword id="KW-0178">Competence</keyword>
<keyword id="KW-1015">Disulfide bond</keyword>
<keyword id="KW-0249">Electron transport</keyword>
<keyword id="KW-0472">Membrane</keyword>
<keyword id="KW-0560">Oxidoreductase</keyword>
<keyword id="KW-0676">Redox-active center</keyword>
<keyword id="KW-1185">Reference proteome</keyword>
<keyword id="KW-0812">Transmembrane</keyword>
<keyword id="KW-1133">Transmembrane helix</keyword>
<keyword id="KW-0813">Transport</keyword>
<dbReference type="EMBL" id="AL009126">
    <property type="protein sequence ID" value="CAB15352.1"/>
    <property type="molecule type" value="Genomic_DNA"/>
</dbReference>
<dbReference type="PIR" id="B70041">
    <property type="entry name" value="B70041"/>
</dbReference>
<dbReference type="RefSeq" id="NP_391227.1">
    <property type="nucleotide sequence ID" value="NC_000964.3"/>
</dbReference>
<dbReference type="RefSeq" id="WP_003228417.1">
    <property type="nucleotide sequence ID" value="NZ_OZ025638.1"/>
</dbReference>
<dbReference type="SMR" id="O32217"/>
<dbReference type="FunCoup" id="O32217">
    <property type="interactions" value="12"/>
</dbReference>
<dbReference type="STRING" id="224308.BSU33470"/>
<dbReference type="PaxDb" id="224308-BSU33470"/>
<dbReference type="EnsemblBacteria" id="CAB15352">
    <property type="protein sequence ID" value="CAB15352"/>
    <property type="gene ID" value="BSU_33470"/>
</dbReference>
<dbReference type="GeneID" id="936042"/>
<dbReference type="KEGG" id="bsu:BSU33470"/>
<dbReference type="PATRIC" id="fig|224308.179.peg.3632"/>
<dbReference type="eggNOG" id="COG1495">
    <property type="taxonomic scope" value="Bacteria"/>
</dbReference>
<dbReference type="InParanoid" id="O32217"/>
<dbReference type="OrthoDB" id="158402at2"/>
<dbReference type="PhylomeDB" id="O32217"/>
<dbReference type="BioCyc" id="BSUB:BSU33470-MONOMER"/>
<dbReference type="Proteomes" id="UP000001570">
    <property type="component" value="Chromosome"/>
</dbReference>
<dbReference type="GO" id="GO:0045121">
    <property type="term" value="C:membrane raft"/>
    <property type="evidence" value="ECO:0007669"/>
    <property type="project" value="UniProtKB-SubCell"/>
</dbReference>
<dbReference type="GO" id="GO:0005886">
    <property type="term" value="C:plasma membrane"/>
    <property type="evidence" value="ECO:0007669"/>
    <property type="project" value="UniProtKB-SubCell"/>
</dbReference>
<dbReference type="GO" id="GO:0015035">
    <property type="term" value="F:protein-disulfide reductase activity"/>
    <property type="evidence" value="ECO:0007669"/>
    <property type="project" value="UniProtKB-UniRule"/>
</dbReference>
<dbReference type="GO" id="GO:0030420">
    <property type="term" value="P:establishment of competence for transformation"/>
    <property type="evidence" value="ECO:0007669"/>
    <property type="project" value="UniProtKB-KW"/>
</dbReference>
<dbReference type="GO" id="GO:0006457">
    <property type="term" value="P:protein folding"/>
    <property type="evidence" value="ECO:0007669"/>
    <property type="project" value="InterPro"/>
</dbReference>
<dbReference type="Gene3D" id="1.20.1550.10">
    <property type="entry name" value="DsbB-like"/>
    <property type="match status" value="1"/>
</dbReference>
<dbReference type="HAMAP" id="MF_00287">
    <property type="entry name" value="BdbC"/>
    <property type="match status" value="1"/>
</dbReference>
<dbReference type="InterPro" id="IPR003752">
    <property type="entry name" value="DiS_bond_form_DsbB/BdbC"/>
</dbReference>
<dbReference type="InterPro" id="IPR012187">
    <property type="entry name" value="Disulphide_bond_form_BdbC"/>
</dbReference>
<dbReference type="InterPro" id="IPR023380">
    <property type="entry name" value="DsbB-like_sf"/>
</dbReference>
<dbReference type="NCBIfam" id="NF002849">
    <property type="entry name" value="PRK03113.1"/>
    <property type="match status" value="1"/>
</dbReference>
<dbReference type="PANTHER" id="PTHR43469">
    <property type="entry name" value="DISULFIDE FORMATION PROTEIN-RELATED"/>
    <property type="match status" value="1"/>
</dbReference>
<dbReference type="PANTHER" id="PTHR43469:SF1">
    <property type="entry name" value="SPBETA PROPHAGE-DERIVED DISULFIDE BOND FORMATION PROTEIN B"/>
    <property type="match status" value="1"/>
</dbReference>
<dbReference type="Pfam" id="PF02600">
    <property type="entry name" value="DsbB"/>
    <property type="match status" value="1"/>
</dbReference>
<dbReference type="PIRSF" id="PIRSF036659">
    <property type="entry name" value="BdbC"/>
    <property type="match status" value="1"/>
</dbReference>
<dbReference type="SUPFAM" id="SSF158442">
    <property type="entry name" value="DsbB-like"/>
    <property type="match status" value="1"/>
</dbReference>
<name>BDBC_BACSU</name>
<organism>
    <name type="scientific">Bacillus subtilis (strain 168)</name>
    <dbReference type="NCBI Taxonomy" id="224308"/>
    <lineage>
        <taxon>Bacteria</taxon>
        <taxon>Bacillati</taxon>
        <taxon>Bacillota</taxon>
        <taxon>Bacilli</taxon>
        <taxon>Bacillales</taxon>
        <taxon>Bacillaceae</taxon>
        <taxon>Bacillus</taxon>
    </lineage>
</organism>
<feature type="chain" id="PRO_0000059376" description="Disulfide bond formation protein C">
    <location>
        <begin position="1"/>
        <end position="138"/>
    </location>
</feature>
<feature type="transmembrane region" description="Helical" evidence="2">
    <location>
        <begin position="5"/>
        <end position="24"/>
    </location>
</feature>
<feature type="transmembrane region" description="Helical" evidence="2">
    <location>
        <begin position="39"/>
        <end position="58"/>
    </location>
</feature>
<feature type="transmembrane region" description="Helical" evidence="2">
    <location>
        <begin position="65"/>
        <end position="82"/>
    </location>
</feature>
<feature type="transmembrane region" description="Helical" evidence="2">
    <location>
        <begin position="110"/>
        <end position="132"/>
    </location>
</feature>
<feature type="disulfide bond" description="Redox-active" evidence="1">
    <location>
        <begin position="34"/>
        <end position="37"/>
    </location>
</feature>
<feature type="disulfide bond" description="Redox-active" evidence="1">
    <location>
        <begin position="95"/>
        <end position="101"/>
    </location>
</feature>